<protein>
    <recommendedName>
        <fullName evidence="1">Flavohemoprotein</fullName>
    </recommendedName>
    <alternativeName>
        <fullName evidence="1">Flavohemoglobin</fullName>
    </alternativeName>
    <alternativeName>
        <fullName evidence="1">Hemoglobin-like protein</fullName>
    </alternativeName>
    <alternativeName>
        <fullName evidence="1">Nitric oxide dioxygenase</fullName>
        <shortName evidence="1">NO oxygenase</shortName>
        <shortName evidence="1">NOD</shortName>
        <ecNumber evidence="1">1.14.12.17</ecNumber>
    </alternativeName>
</protein>
<reference key="1">
    <citation type="journal article" date="2003" name="J. Bacteriol.">
        <title>Comparative analyses of the complete genome sequences of Pierce's disease and citrus variegated chlorosis strains of Xylella fastidiosa.</title>
        <authorList>
            <person name="Van Sluys M.A."/>
            <person name="de Oliveira M.C."/>
            <person name="Monteiro-Vitorello C.B."/>
            <person name="Miyaki C.Y."/>
            <person name="Furlan L.R."/>
            <person name="Camargo L.E.A."/>
            <person name="da Silva A.C.R."/>
            <person name="Moon D.H."/>
            <person name="Takita M.A."/>
            <person name="Lemos E.G.M."/>
            <person name="Machado M.A."/>
            <person name="Ferro M.I.T."/>
            <person name="da Silva F.R."/>
            <person name="Goldman M.H.S."/>
            <person name="Goldman G.H."/>
            <person name="Lemos M.V.F."/>
            <person name="El-Dorry H."/>
            <person name="Tsai S.M."/>
            <person name="Carrer H."/>
            <person name="Carraro D.M."/>
            <person name="de Oliveira R.C."/>
            <person name="Nunes L.R."/>
            <person name="Siqueira W.J."/>
            <person name="Coutinho L.L."/>
            <person name="Kimura E.T."/>
            <person name="Ferro E.S."/>
            <person name="Harakava R."/>
            <person name="Kuramae E.E."/>
            <person name="Marino C.L."/>
            <person name="Giglioti E."/>
            <person name="Abreu I.L."/>
            <person name="Alves L.M.C."/>
            <person name="do Amaral A.M."/>
            <person name="Baia G.S."/>
            <person name="Blanco S.R."/>
            <person name="Brito M.S."/>
            <person name="Cannavan F.S."/>
            <person name="Celestino A.V."/>
            <person name="da Cunha A.F."/>
            <person name="Fenille R.C."/>
            <person name="Ferro J.A."/>
            <person name="Formighieri E.F."/>
            <person name="Kishi L.T."/>
            <person name="Leoni S.G."/>
            <person name="Oliveira A.R."/>
            <person name="Rosa V.E. Jr."/>
            <person name="Sassaki F.T."/>
            <person name="Sena J.A.D."/>
            <person name="de Souza A.A."/>
            <person name="Truffi D."/>
            <person name="Tsukumo F."/>
            <person name="Yanai G.M."/>
            <person name="Zaros L.G."/>
            <person name="Civerolo E.L."/>
            <person name="Simpson A.J.G."/>
            <person name="Almeida N.F. Jr."/>
            <person name="Setubal J.C."/>
            <person name="Kitajima J.P."/>
        </authorList>
    </citation>
    <scope>NUCLEOTIDE SEQUENCE [LARGE SCALE GENOMIC DNA]</scope>
    <source>
        <strain>Temecula1 / ATCC 700964</strain>
    </source>
</reference>
<keyword id="KW-0216">Detoxification</keyword>
<keyword id="KW-0274">FAD</keyword>
<keyword id="KW-0285">Flavoprotein</keyword>
<keyword id="KW-0349">Heme</keyword>
<keyword id="KW-0408">Iron</keyword>
<keyword id="KW-0479">Metal-binding</keyword>
<keyword id="KW-0520">NAD</keyword>
<keyword id="KW-0521">NADP</keyword>
<keyword id="KW-0560">Oxidoreductase</keyword>
<keyword id="KW-0561">Oxygen transport</keyword>
<keyword id="KW-1185">Reference proteome</keyword>
<keyword id="KW-0813">Transport</keyword>
<evidence type="ECO:0000255" key="1">
    <source>
        <dbReference type="HAMAP-Rule" id="MF_01252"/>
    </source>
</evidence>
<evidence type="ECO:0000255" key="2">
    <source>
        <dbReference type="PROSITE-ProRule" id="PRU00238"/>
    </source>
</evidence>
<accession>Q87F90</accession>
<feature type="chain" id="PRO_0000052454" description="Flavohemoprotein">
    <location>
        <begin position="1"/>
        <end position="397"/>
    </location>
</feature>
<feature type="domain" description="Globin" evidence="2">
    <location>
        <begin position="4"/>
        <end position="140"/>
    </location>
</feature>
<feature type="domain" description="FAD-binding FR-type" evidence="1">
    <location>
        <begin position="154"/>
        <end position="258"/>
    </location>
</feature>
<feature type="region of interest" description="Reductase">
    <location>
        <begin position="151"/>
        <end position="397"/>
    </location>
</feature>
<feature type="active site" description="Charge relay system" evidence="1">
    <location>
        <position position="97"/>
    </location>
</feature>
<feature type="active site" description="Charge relay system" evidence="1">
    <location>
        <position position="139"/>
    </location>
</feature>
<feature type="binding site" description="proximal binding residue" evidence="1">
    <location>
        <position position="87"/>
    </location>
    <ligand>
        <name>heme b</name>
        <dbReference type="ChEBI" id="CHEBI:60344"/>
    </ligand>
    <ligandPart>
        <name>Fe</name>
        <dbReference type="ChEBI" id="CHEBI:18248"/>
    </ligandPart>
</feature>
<feature type="binding site" evidence="1">
    <location>
        <position position="192"/>
    </location>
    <ligand>
        <name>FAD</name>
        <dbReference type="ChEBI" id="CHEBI:57692"/>
    </ligand>
</feature>
<feature type="binding site" evidence="1">
    <location>
        <begin position="207"/>
        <end position="210"/>
    </location>
    <ligand>
        <name>FAD</name>
        <dbReference type="ChEBI" id="CHEBI:57692"/>
    </ligand>
</feature>
<feature type="binding site" evidence="1">
    <location>
        <begin position="271"/>
        <end position="276"/>
    </location>
    <ligand>
        <name>NADP(+)</name>
        <dbReference type="ChEBI" id="CHEBI:58349"/>
    </ligand>
</feature>
<feature type="binding site" evidence="1">
    <location>
        <begin position="387"/>
        <end position="390"/>
    </location>
    <ligand>
        <name>FAD</name>
        <dbReference type="ChEBI" id="CHEBI:57692"/>
    </ligand>
</feature>
<feature type="site" description="Involved in heme-bound ligand stabilization and O-O bond activation" evidence="1">
    <location>
        <position position="32"/>
    </location>
</feature>
<feature type="site" description="Influences the redox potential of the prosthetic heme and FAD groups" evidence="1">
    <location>
        <position position="86"/>
    </location>
</feature>
<feature type="site" description="Influences the redox potential of the prosthetic heme and FAD groups" evidence="1">
    <location>
        <position position="386"/>
    </location>
</feature>
<comment type="function">
    <text evidence="1">Is involved in NO detoxification in an aerobic process, termed nitric oxide dioxygenase (NOD) reaction that utilizes O(2) and NAD(P)H to convert NO to nitrate, which protects the bacterium from various noxious nitrogen compounds. Therefore, plays a central role in the inducible response to nitrosative stress.</text>
</comment>
<comment type="catalytic activity">
    <reaction evidence="1">
        <text>2 nitric oxide + NADPH + 2 O2 = 2 nitrate + NADP(+) + H(+)</text>
        <dbReference type="Rhea" id="RHEA:19465"/>
        <dbReference type="ChEBI" id="CHEBI:15378"/>
        <dbReference type="ChEBI" id="CHEBI:15379"/>
        <dbReference type="ChEBI" id="CHEBI:16480"/>
        <dbReference type="ChEBI" id="CHEBI:17632"/>
        <dbReference type="ChEBI" id="CHEBI:57783"/>
        <dbReference type="ChEBI" id="CHEBI:58349"/>
        <dbReference type="EC" id="1.14.12.17"/>
    </reaction>
</comment>
<comment type="catalytic activity">
    <reaction evidence="1">
        <text>2 nitric oxide + NADH + 2 O2 = 2 nitrate + NAD(+) + H(+)</text>
        <dbReference type="Rhea" id="RHEA:19469"/>
        <dbReference type="ChEBI" id="CHEBI:15378"/>
        <dbReference type="ChEBI" id="CHEBI:15379"/>
        <dbReference type="ChEBI" id="CHEBI:16480"/>
        <dbReference type="ChEBI" id="CHEBI:17632"/>
        <dbReference type="ChEBI" id="CHEBI:57540"/>
        <dbReference type="ChEBI" id="CHEBI:57945"/>
        <dbReference type="EC" id="1.14.12.17"/>
    </reaction>
</comment>
<comment type="cofactor">
    <cofactor evidence="1">
        <name>heme b</name>
        <dbReference type="ChEBI" id="CHEBI:60344"/>
    </cofactor>
    <text evidence="1">Binds 1 heme b (iron(II)-protoporphyrin IX) group per subunit.</text>
</comment>
<comment type="cofactor">
    <cofactor evidence="1">
        <name>FAD</name>
        <dbReference type="ChEBI" id="CHEBI:57692"/>
    </cofactor>
    <text evidence="1">Binds 1 FAD per subunit.</text>
</comment>
<comment type="domain">
    <text>Consists of two distinct domains; an N-terminal heme-containing oxygen-binding domain and a C-terminal reductase domain with binding sites for FAD and NAD(P)H.</text>
</comment>
<comment type="similarity">
    <text evidence="1">Belongs to the globin family. Two-domain flavohemoproteins subfamily.</text>
</comment>
<comment type="similarity">
    <text evidence="1">In the C-terminal section; belongs to the flavoprotein pyridine nucleotide cytochrome reductase family.</text>
</comment>
<dbReference type="EC" id="1.14.12.17" evidence="1"/>
<dbReference type="EMBL" id="AE009442">
    <property type="protein sequence ID" value="AAO27945.1"/>
    <property type="molecule type" value="Genomic_DNA"/>
</dbReference>
<dbReference type="RefSeq" id="WP_004087135.1">
    <property type="nucleotide sequence ID" value="NC_004556.1"/>
</dbReference>
<dbReference type="SMR" id="Q87F90"/>
<dbReference type="GeneID" id="93903728"/>
<dbReference type="KEGG" id="xft:PD_0038"/>
<dbReference type="HOGENOM" id="CLU_003827_12_0_6"/>
<dbReference type="Proteomes" id="UP000002516">
    <property type="component" value="Chromosome"/>
</dbReference>
<dbReference type="GO" id="GO:0071949">
    <property type="term" value="F:FAD binding"/>
    <property type="evidence" value="ECO:0007669"/>
    <property type="project" value="InterPro"/>
</dbReference>
<dbReference type="GO" id="GO:0020037">
    <property type="term" value="F:heme binding"/>
    <property type="evidence" value="ECO:0007669"/>
    <property type="project" value="InterPro"/>
</dbReference>
<dbReference type="GO" id="GO:0046872">
    <property type="term" value="F:metal ion binding"/>
    <property type="evidence" value="ECO:0007669"/>
    <property type="project" value="UniProtKB-KW"/>
</dbReference>
<dbReference type="GO" id="GO:0008941">
    <property type="term" value="F:nitric oxide dioxygenase NAD(P)H activity"/>
    <property type="evidence" value="ECO:0007669"/>
    <property type="project" value="UniProtKB-UniRule"/>
</dbReference>
<dbReference type="GO" id="GO:0019825">
    <property type="term" value="F:oxygen binding"/>
    <property type="evidence" value="ECO:0007669"/>
    <property type="project" value="InterPro"/>
</dbReference>
<dbReference type="GO" id="GO:0005344">
    <property type="term" value="F:oxygen carrier activity"/>
    <property type="evidence" value="ECO:0007669"/>
    <property type="project" value="UniProtKB-UniRule"/>
</dbReference>
<dbReference type="GO" id="GO:0071500">
    <property type="term" value="P:cellular response to nitrosative stress"/>
    <property type="evidence" value="ECO:0007669"/>
    <property type="project" value="TreeGrafter"/>
</dbReference>
<dbReference type="GO" id="GO:0046210">
    <property type="term" value="P:nitric oxide catabolic process"/>
    <property type="evidence" value="ECO:0007669"/>
    <property type="project" value="TreeGrafter"/>
</dbReference>
<dbReference type="GO" id="GO:0009636">
    <property type="term" value="P:response to toxic substance"/>
    <property type="evidence" value="ECO:0007669"/>
    <property type="project" value="UniProtKB-KW"/>
</dbReference>
<dbReference type="CDD" id="cd14781">
    <property type="entry name" value="FHb-globin_1"/>
    <property type="match status" value="1"/>
</dbReference>
<dbReference type="CDD" id="cd06184">
    <property type="entry name" value="flavohem_like_fad_nad_binding"/>
    <property type="match status" value="1"/>
</dbReference>
<dbReference type="FunFam" id="1.10.490.10:FF:000003">
    <property type="entry name" value="Flavohemoprotein"/>
    <property type="match status" value="1"/>
</dbReference>
<dbReference type="FunFam" id="3.40.50.80:FF:000010">
    <property type="entry name" value="Flavohemoprotein"/>
    <property type="match status" value="1"/>
</dbReference>
<dbReference type="Gene3D" id="1.10.490.10">
    <property type="entry name" value="Globins"/>
    <property type="match status" value="1"/>
</dbReference>
<dbReference type="Gene3D" id="3.40.50.80">
    <property type="entry name" value="Nucleotide-binding domain of ferredoxin-NADP reductase (FNR) module"/>
    <property type="match status" value="1"/>
</dbReference>
<dbReference type="Gene3D" id="2.40.30.10">
    <property type="entry name" value="Translation factors"/>
    <property type="match status" value="1"/>
</dbReference>
<dbReference type="HAMAP" id="MF_01252">
    <property type="entry name" value="Hmp"/>
    <property type="match status" value="1"/>
</dbReference>
<dbReference type="InterPro" id="IPR017927">
    <property type="entry name" value="FAD-bd_FR_type"/>
</dbReference>
<dbReference type="InterPro" id="IPR039261">
    <property type="entry name" value="FNR_nucleotide-bd"/>
</dbReference>
<dbReference type="InterPro" id="IPR000971">
    <property type="entry name" value="Globin"/>
</dbReference>
<dbReference type="InterPro" id="IPR009050">
    <property type="entry name" value="Globin-like_sf"/>
</dbReference>
<dbReference type="InterPro" id="IPR012292">
    <property type="entry name" value="Globin/Proto"/>
</dbReference>
<dbReference type="InterPro" id="IPR023950">
    <property type="entry name" value="Hmp"/>
</dbReference>
<dbReference type="InterPro" id="IPR001433">
    <property type="entry name" value="OxRdtase_FAD/NAD-bd"/>
</dbReference>
<dbReference type="InterPro" id="IPR017938">
    <property type="entry name" value="Riboflavin_synthase-like_b-brl"/>
</dbReference>
<dbReference type="NCBIfam" id="NF009805">
    <property type="entry name" value="PRK13289.1"/>
    <property type="match status" value="1"/>
</dbReference>
<dbReference type="PANTHER" id="PTHR43396">
    <property type="entry name" value="FLAVOHEMOPROTEIN"/>
    <property type="match status" value="1"/>
</dbReference>
<dbReference type="PANTHER" id="PTHR43396:SF3">
    <property type="entry name" value="FLAVOHEMOPROTEIN"/>
    <property type="match status" value="1"/>
</dbReference>
<dbReference type="Pfam" id="PF00042">
    <property type="entry name" value="Globin"/>
    <property type="match status" value="1"/>
</dbReference>
<dbReference type="Pfam" id="PF00175">
    <property type="entry name" value="NAD_binding_1"/>
    <property type="match status" value="1"/>
</dbReference>
<dbReference type="PRINTS" id="PR00409">
    <property type="entry name" value="PHDIOXRDTASE"/>
</dbReference>
<dbReference type="SUPFAM" id="SSF52343">
    <property type="entry name" value="Ferredoxin reductase-like, C-terminal NADP-linked domain"/>
    <property type="match status" value="1"/>
</dbReference>
<dbReference type="SUPFAM" id="SSF46458">
    <property type="entry name" value="Globin-like"/>
    <property type="match status" value="1"/>
</dbReference>
<dbReference type="SUPFAM" id="SSF63380">
    <property type="entry name" value="Riboflavin synthase domain-like"/>
    <property type="match status" value="1"/>
</dbReference>
<dbReference type="PROSITE" id="PS51384">
    <property type="entry name" value="FAD_FR"/>
    <property type="match status" value="1"/>
</dbReference>
<dbReference type="PROSITE" id="PS01033">
    <property type="entry name" value="GLOBIN"/>
    <property type="match status" value="1"/>
</dbReference>
<proteinExistence type="inferred from homology"/>
<gene>
    <name evidence="1" type="primary">hmp</name>
    <name type="synonym">hmpA</name>
    <name type="ordered locus">PD_0038</name>
</gene>
<sequence length="397" mass="44089">MSASFSPHTITLIKSTVPLLAEHGTTIIEAMYHRLFEDPQIEALFNQANQKNGTQIHALAGAILAYARNIDNPGVLASAIERISQKHVGYAIHPEHYPHVATALLGAIKQVLGDVATSEVLEAWGEAYWFIANLLKDREAVIREGIMTKNGGWIHWRRFVISKRIPESETITSFMLHPEDGGPVVPHQAGQYLTFRFDAAGMPGMKRNYSISCGPNSDHYRITVKREHGTGASAFLHDQAKVGTIIECTPPVGDFFLPSVIERPIVLLSGGVGLTPMVSMMEQIAEAYPDAQVWYVHGTQNRETHAMDAHIRALVSRHKHMKATTFYTQRSEADDAEAGFITIDWLRANTPFQKADFYLCGPRPFLRTFVRDLIGAGVPAAQVHYEFFGPMDEEMAA</sequence>
<name>HMP_XYLFT</name>
<organism>
    <name type="scientific">Xylella fastidiosa (strain Temecula1 / ATCC 700964)</name>
    <dbReference type="NCBI Taxonomy" id="183190"/>
    <lineage>
        <taxon>Bacteria</taxon>
        <taxon>Pseudomonadati</taxon>
        <taxon>Pseudomonadota</taxon>
        <taxon>Gammaproteobacteria</taxon>
        <taxon>Lysobacterales</taxon>
        <taxon>Lysobacteraceae</taxon>
        <taxon>Xylella</taxon>
    </lineage>
</organism>